<reference key="1">
    <citation type="submission" date="2007-03" db="EMBL/GenBank/DDBJ databases">
        <authorList>
            <consortium name="NIH - Xenopus Gene Collection (XGC) project"/>
        </authorList>
    </citation>
    <scope>NUCLEOTIDE SEQUENCE [LARGE SCALE MRNA]</scope>
    <source>
        <tissue>Embryo</tissue>
    </source>
</reference>
<organism>
    <name type="scientific">Xenopus tropicalis</name>
    <name type="common">Western clawed frog</name>
    <name type="synonym">Silurana tropicalis</name>
    <dbReference type="NCBI Taxonomy" id="8364"/>
    <lineage>
        <taxon>Eukaryota</taxon>
        <taxon>Metazoa</taxon>
        <taxon>Chordata</taxon>
        <taxon>Craniata</taxon>
        <taxon>Vertebrata</taxon>
        <taxon>Euteleostomi</taxon>
        <taxon>Amphibia</taxon>
        <taxon>Batrachia</taxon>
        <taxon>Anura</taxon>
        <taxon>Pipoidea</taxon>
        <taxon>Pipidae</taxon>
        <taxon>Xenopodinae</taxon>
        <taxon>Xenopus</taxon>
        <taxon>Silurana</taxon>
    </lineage>
</organism>
<accession>A4IH17</accession>
<proteinExistence type="evidence at transcript level"/>
<dbReference type="EMBL" id="BC135335">
    <property type="protein sequence ID" value="AAI35336.1"/>
    <property type="molecule type" value="mRNA"/>
</dbReference>
<dbReference type="RefSeq" id="NP_001090878.2">
    <property type="nucleotide sequence ID" value="NM_001097409.2"/>
</dbReference>
<dbReference type="SMR" id="A4IH17"/>
<dbReference type="FunCoup" id="A4IH17">
    <property type="interactions" value="3742"/>
</dbReference>
<dbReference type="STRING" id="8364.ENSXETP00000016668"/>
<dbReference type="GeneID" id="100038304"/>
<dbReference type="KEGG" id="xtr:100038304"/>
<dbReference type="CTD" id="7917"/>
<dbReference type="eggNOG" id="KOG4248">
    <property type="taxonomic scope" value="Eukaryota"/>
</dbReference>
<dbReference type="InParanoid" id="A4IH17"/>
<dbReference type="OrthoDB" id="1885901at2759"/>
<dbReference type="Proteomes" id="UP000008143">
    <property type="component" value="Chromosome 8"/>
</dbReference>
<dbReference type="GO" id="GO:0071818">
    <property type="term" value="C:BAT3 complex"/>
    <property type="evidence" value="ECO:0000250"/>
    <property type="project" value="UniProtKB"/>
</dbReference>
<dbReference type="GO" id="GO:0005829">
    <property type="term" value="C:cytosol"/>
    <property type="evidence" value="ECO:0000250"/>
    <property type="project" value="UniProtKB"/>
</dbReference>
<dbReference type="GO" id="GO:0005576">
    <property type="term" value="C:extracellular region"/>
    <property type="evidence" value="ECO:0007669"/>
    <property type="project" value="UniProtKB-SubCell"/>
</dbReference>
<dbReference type="GO" id="GO:0005634">
    <property type="term" value="C:nucleus"/>
    <property type="evidence" value="ECO:0000250"/>
    <property type="project" value="UniProtKB"/>
</dbReference>
<dbReference type="GO" id="GO:0031593">
    <property type="term" value="F:polyubiquitin modification-dependent protein binding"/>
    <property type="evidence" value="ECO:0000250"/>
    <property type="project" value="UniProtKB"/>
</dbReference>
<dbReference type="GO" id="GO:0070628">
    <property type="term" value="F:proteasome binding"/>
    <property type="evidence" value="ECO:0000250"/>
    <property type="project" value="UniProtKB"/>
</dbReference>
<dbReference type="GO" id="GO:0043022">
    <property type="term" value="F:ribosome binding"/>
    <property type="evidence" value="ECO:0000250"/>
    <property type="project" value="UniProtKB"/>
</dbReference>
<dbReference type="GO" id="GO:0007420">
    <property type="term" value="P:brain development"/>
    <property type="evidence" value="ECO:0000250"/>
    <property type="project" value="UniProtKB"/>
</dbReference>
<dbReference type="GO" id="GO:0006325">
    <property type="term" value="P:chromatin organization"/>
    <property type="evidence" value="ECO:0007669"/>
    <property type="project" value="UniProtKB-KW"/>
</dbReference>
<dbReference type="GO" id="GO:0061857">
    <property type="term" value="P:endoplasmic reticulum stress-induced pre-emptive quality control"/>
    <property type="evidence" value="ECO:0000250"/>
    <property type="project" value="UniProtKB"/>
</dbReference>
<dbReference type="GO" id="GO:0036503">
    <property type="term" value="P:ERAD pathway"/>
    <property type="evidence" value="ECO:0000250"/>
    <property type="project" value="UniProtKB"/>
</dbReference>
<dbReference type="GO" id="GO:0018393">
    <property type="term" value="P:internal peptidyl-lysine acetylation"/>
    <property type="evidence" value="ECO:0000250"/>
    <property type="project" value="UniProtKB"/>
</dbReference>
<dbReference type="GO" id="GO:0042771">
    <property type="term" value="P:intrinsic apoptotic signaling pathway in response to DNA damage by p53 class mediator"/>
    <property type="evidence" value="ECO:0000250"/>
    <property type="project" value="UniProtKB"/>
</dbReference>
<dbReference type="GO" id="GO:0070059">
    <property type="term" value="P:intrinsic apoptotic signaling pathway in response to endoplasmic reticulum stress"/>
    <property type="evidence" value="ECO:0000250"/>
    <property type="project" value="UniProtKB"/>
</dbReference>
<dbReference type="GO" id="GO:0001822">
    <property type="term" value="P:kidney development"/>
    <property type="evidence" value="ECO:0000250"/>
    <property type="project" value="UniProtKB"/>
</dbReference>
<dbReference type="GO" id="GO:0030324">
    <property type="term" value="P:lung development"/>
    <property type="evidence" value="ECO:0000250"/>
    <property type="project" value="UniProtKB"/>
</dbReference>
<dbReference type="GO" id="GO:0032435">
    <property type="term" value="P:negative regulation of proteasomal ubiquitin-dependent protein catabolic process"/>
    <property type="evidence" value="ECO:0000250"/>
    <property type="project" value="UniProtKB"/>
</dbReference>
<dbReference type="GO" id="GO:0045861">
    <property type="term" value="P:negative regulation of proteolysis"/>
    <property type="evidence" value="ECO:0000250"/>
    <property type="project" value="UniProtKB"/>
</dbReference>
<dbReference type="GO" id="GO:0010498">
    <property type="term" value="P:proteasomal protein catabolic process"/>
    <property type="evidence" value="ECO:0000250"/>
    <property type="project" value="UniProtKB"/>
</dbReference>
<dbReference type="GO" id="GO:0050821">
    <property type="term" value="P:protein stabilization"/>
    <property type="evidence" value="ECO:0000250"/>
    <property type="project" value="UniProtKB"/>
</dbReference>
<dbReference type="GO" id="GO:0042981">
    <property type="term" value="P:regulation of apoptotic process"/>
    <property type="evidence" value="ECO:0000250"/>
    <property type="project" value="UniProtKB"/>
</dbReference>
<dbReference type="GO" id="GO:0045995">
    <property type="term" value="P:regulation of embryonic development"/>
    <property type="evidence" value="ECO:0000250"/>
    <property type="project" value="UniProtKB"/>
</dbReference>
<dbReference type="GO" id="GO:0007283">
    <property type="term" value="P:spermatogenesis"/>
    <property type="evidence" value="ECO:0000250"/>
    <property type="project" value="UniProtKB"/>
</dbReference>
<dbReference type="GO" id="GO:0007130">
    <property type="term" value="P:synaptonemal complex assembly"/>
    <property type="evidence" value="ECO:0000250"/>
    <property type="project" value="UniProtKB"/>
</dbReference>
<dbReference type="GO" id="GO:0071816">
    <property type="term" value="P:tail-anchored membrane protein insertion into ER membrane"/>
    <property type="evidence" value="ECO:0000250"/>
    <property type="project" value="UniProtKB"/>
</dbReference>
<dbReference type="GO" id="GO:0006511">
    <property type="term" value="P:ubiquitin-dependent protein catabolic process"/>
    <property type="evidence" value="ECO:0000250"/>
    <property type="project" value="UniProtKB"/>
</dbReference>
<dbReference type="CDD" id="cd01809">
    <property type="entry name" value="Ubl_BAG6"/>
    <property type="match status" value="1"/>
</dbReference>
<dbReference type="FunFam" id="3.10.20.90:FF:000041">
    <property type="entry name" value="large proline-rich protein BAG6 isoform X1"/>
    <property type="match status" value="1"/>
</dbReference>
<dbReference type="Gene3D" id="3.10.20.90">
    <property type="entry name" value="Phosphatidylinositol 3-kinase Catalytic Subunit, Chain A, domain 1"/>
    <property type="match status" value="1"/>
</dbReference>
<dbReference type="InterPro" id="IPR021925">
    <property type="entry name" value="BAG6"/>
</dbReference>
<dbReference type="InterPro" id="IPR048926">
    <property type="entry name" value="Bag6_BAGS"/>
</dbReference>
<dbReference type="InterPro" id="IPR000626">
    <property type="entry name" value="Ubiquitin-like_dom"/>
</dbReference>
<dbReference type="InterPro" id="IPR029071">
    <property type="entry name" value="Ubiquitin-like_domsf"/>
</dbReference>
<dbReference type="PANTHER" id="PTHR15204">
    <property type="entry name" value="LARGE PROLINE-RICH PROTEIN BAG6"/>
    <property type="match status" value="1"/>
</dbReference>
<dbReference type="PANTHER" id="PTHR15204:SF0">
    <property type="entry name" value="LARGE PROLINE-RICH PROTEIN BAG6"/>
    <property type="match status" value="1"/>
</dbReference>
<dbReference type="Pfam" id="PF12057">
    <property type="entry name" value="BAG6"/>
    <property type="match status" value="1"/>
</dbReference>
<dbReference type="Pfam" id="PF20960">
    <property type="entry name" value="Bag6_BAGS"/>
    <property type="match status" value="1"/>
</dbReference>
<dbReference type="Pfam" id="PF00240">
    <property type="entry name" value="ubiquitin"/>
    <property type="match status" value="1"/>
</dbReference>
<dbReference type="SMART" id="SM00213">
    <property type="entry name" value="UBQ"/>
    <property type="match status" value="1"/>
</dbReference>
<dbReference type="SUPFAM" id="SSF54236">
    <property type="entry name" value="Ubiquitin-like"/>
    <property type="match status" value="1"/>
</dbReference>
<dbReference type="PROSITE" id="PS50053">
    <property type="entry name" value="UBIQUITIN_2"/>
    <property type="match status" value="1"/>
</dbReference>
<sequence length="1129" mass="120785">MEVTVKTLDSQTRTFTVDAEITVKEFKTHISSDVGISPEKQRLIYQGRVLQEDKKLKEYNVDGKVIHLVERAPPQTQPSTGGPSTSSSTSPSSSNAANVPGAGAPERNGNSYVMVGTFNLPHVMSGLGEASRGPRVSTVSGNDGSTLDVHINLDQQLPVQSEPRVRLVLAQQILQDIQRILDRLEGQPVNEQTAEPMDTAVSEGEASSRETLPQTTQNTDGQSNTAPTSHPSPSEYVEVLQSLSRVEERLAPFMQRYREILSSATSDAYENQEEREQSQRIINLVGESLRLLGNALVAVSDLRCNLSSASPRHLHVVRPMSHYTGPMLLQQAAIPIQINVGTTVTMTGNGTHAGQMPSDGNAAHTPTNTSEPQRSNSDNQPPSSGERPASEIPPTSVPHPHPRVVRITHQTVEPVMMMHMNIQDSGPGGPTNIPPPTAGHGGSAHIHMPGLPPEFMQAISHQITQQAVAAASGQQIPGFQAPPRFVFTRPAAPSFPPQPGVATTPPGPGGATTAVPGATVGPAGNASLAQMISGLVGQLLMHPVIVAQGGSNTPSSTSTPTSTSSSSSSSSSTVTTSTTTTSSTSFPTVSSGPSPQPPPGTDQHLSQLLGSLLGTAGSGMSNFAMGSPSITVTVPGMPAFLQGVTDILQATQTVPVSTSPPQSASQAPPPSSPSPPPAHSSPPPAAAPESLPPEFFTSVVQGVLSSMLGSLSAADQSGTESIAAFIQRLSGSHNIFQPDAEGPGGFFGDLLTLICHNFSLVDMVMLLHGHSQPLQNLQPQLRSFFLQEYLHQADPTPNNIQMASRNLTNGLEEYIRESFASVTVRDDVDITRTNLEFLQDQFNRITTHILHCADSTFGQRLLEMCNQSLFEWLALNLYCLRGDQSALTSVINERIRRLSLDVSPVLVSWVTSVLSLRLQVLLGQMPVTEGEIQRHIRRVGDVPQAPEASSQDQPMETTPVDCQNGAASPVPATTVEEVLFLPPQSSVPTICTDSEHPTQEDTGSEQWAASVPPEWVPVIRQDMQNQRKMKQQPPLSDAYLSGMPAKRRKTMQGEGPHLSLSEAVSRAMKATGAKPESSTDCVRRELDNSEAQGRYREQLCQDIQNILQDNESYSAQRFPNTQRAFRGDP</sequence>
<feature type="chain" id="PRO_0000403755" description="Large proline-rich protein bag6">
    <location>
        <begin position="1"/>
        <end position="1129"/>
    </location>
</feature>
<feature type="domain" description="Ubiquitin-like" evidence="2">
    <location>
        <begin position="1"/>
        <end position="76"/>
    </location>
</feature>
<feature type="region of interest" description="Disordered" evidence="3">
    <location>
        <begin position="69"/>
        <end position="108"/>
    </location>
</feature>
<feature type="region of interest" description="Disordered" evidence="3">
    <location>
        <begin position="187"/>
        <end position="235"/>
    </location>
</feature>
<feature type="region of interest" description="Disordered" evidence="3">
    <location>
        <begin position="347"/>
        <end position="402"/>
    </location>
</feature>
<feature type="region of interest" description="Disordered" evidence="3">
    <location>
        <begin position="490"/>
        <end position="518"/>
    </location>
</feature>
<feature type="region of interest" description="Disordered" evidence="3">
    <location>
        <begin position="550"/>
        <end position="606"/>
    </location>
</feature>
<feature type="region of interest" description="Disordered" evidence="3">
    <location>
        <begin position="654"/>
        <end position="692"/>
    </location>
</feature>
<feature type="region of interest" description="Disordered" evidence="3">
    <location>
        <begin position="942"/>
        <end position="967"/>
    </location>
</feature>
<feature type="region of interest" description="Disordered" evidence="3">
    <location>
        <begin position="987"/>
        <end position="1009"/>
    </location>
</feature>
<feature type="compositionally biased region" description="Low complexity" evidence="3">
    <location>
        <begin position="73"/>
        <end position="105"/>
    </location>
</feature>
<feature type="compositionally biased region" description="Polar residues" evidence="3">
    <location>
        <begin position="209"/>
        <end position="232"/>
    </location>
</feature>
<feature type="compositionally biased region" description="Polar residues" evidence="3">
    <location>
        <begin position="364"/>
        <end position="383"/>
    </location>
</feature>
<feature type="compositionally biased region" description="Low complexity" evidence="3">
    <location>
        <begin position="553"/>
        <end position="593"/>
    </location>
</feature>
<feature type="compositionally biased region" description="Low complexity" evidence="3">
    <location>
        <begin position="655"/>
        <end position="666"/>
    </location>
</feature>
<feature type="compositionally biased region" description="Pro residues" evidence="3">
    <location>
        <begin position="667"/>
        <end position="686"/>
    </location>
</feature>
<feature type="compositionally biased region" description="Polar residues" evidence="3">
    <location>
        <begin position="947"/>
        <end position="956"/>
    </location>
</feature>
<comment type="function">
    <text evidence="1">ATP-independent molecular chaperone preventing the aggregation of misfolded and hydrophobic patches-containing proteins. Functions as part of a cytosolic protein quality control complex, the bag6/bat3 complex, which maintains these client proteins in a soluble state and participates in their proper delivery to the endoplasmic reticulum or alternatively can promote their sorting to the proteasome where they undergo degradation. The bag6/bat3 complex is involved in the post-translational delivery of tail-anchored/type II transmembrane proteins to the endoplasmic reticulum membrane. Similarly, the bag6/bat3 complex also functions as a sorting platform for proteins of the secretory pathway that are mislocalized to the cytosol either delivering them to the proteasome for degradation or to the endoplasmic reticulum. The bag6/bat3 complex also plays a role in the endoplasmic reticulum-associated degradation (ERAD), a quality control mechanism that eliminates unwanted proteins of the endoplasmic reticulum through their retrotranslocation to the cytosol and their targeting to the proteasome. It maintains these retrotranslocated proteins in an unfolded yet soluble state condition in the cytosol to ensure their proper delivery to the proteasome. Also required for selective ubiquitin-mediated degradation of defective nascent chain polypeptides by the proteasome. Also involved in endoplasmic reticulum stress-induced pre-emptive quality control, a mechanism that selectively attenuates the translocation of newly synthesized proteins into the endoplasmic reticulum and reroutes them to the cytosol for proteasomal degradation. May ensure the proper degradation of these proteins and thereby protects the endoplasmic reticulum from protein overload upon stress. By stabilizing a large spectrum of proteins, may indirectly affect different biological processes including apoptosis. By controlling the steady-state expression of the IGF1R receptor, indirectly regulates the insulin-like growth factor receptor signaling pathway.</text>
</comment>
<comment type="function">
    <text evidence="1">When nuclear, may also act as a component of some chromatin regulator complex.</text>
</comment>
<comment type="subunit">
    <text evidence="1">Component of the bag6/bat3 complex.</text>
</comment>
<comment type="subcellular location">
    <subcellularLocation>
        <location evidence="1">Cytoplasm</location>
        <location evidence="1">Cytosol</location>
    </subcellularLocation>
    <subcellularLocation>
        <location evidence="1">Nucleus</location>
    </subcellularLocation>
    <subcellularLocation>
        <location evidence="1">Secreted</location>
        <location evidence="1">Extracellular exosome</location>
    </subcellularLocation>
</comment>
<protein>
    <recommendedName>
        <fullName evidence="4">Large proline-rich protein bag6</fullName>
    </recommendedName>
    <alternativeName>
        <fullName evidence="1">BCL2-associated athanogene 6</fullName>
    </alternativeName>
    <alternativeName>
        <fullName evidence="1">HLA-B-associated transcript 3</fullName>
    </alternativeName>
</protein>
<evidence type="ECO:0000250" key="1">
    <source>
        <dbReference type="UniProtKB" id="P46379"/>
    </source>
</evidence>
<evidence type="ECO:0000255" key="2">
    <source>
        <dbReference type="PROSITE-ProRule" id="PRU00214"/>
    </source>
</evidence>
<evidence type="ECO:0000256" key="3">
    <source>
        <dbReference type="SAM" id="MobiDB-lite"/>
    </source>
</evidence>
<evidence type="ECO:0000305" key="4"/>
<name>BAG6_XENTR</name>
<keyword id="KW-0053">Apoptosis</keyword>
<keyword id="KW-0143">Chaperone</keyword>
<keyword id="KW-0156">Chromatin regulator</keyword>
<keyword id="KW-0963">Cytoplasm</keyword>
<keyword id="KW-0539">Nucleus</keyword>
<keyword id="KW-1185">Reference proteome</keyword>
<keyword id="KW-0964">Secreted</keyword>
<keyword id="KW-0813">Transport</keyword>
<gene>
    <name evidence="1" type="primary">Bag6</name>
    <name evidence="1" type="synonym">bat3</name>
</gene>